<proteinExistence type="inferred from homology"/>
<geneLocation type="chloroplast"/>
<feature type="chain" id="PRO_0000062607" description="Ribulose bisphosphate carboxylase large chain">
    <location>
        <begin position="1" status="less than"/>
        <end position="466"/>
    </location>
</feature>
<feature type="active site" description="Proton acceptor" evidence="1">
    <location>
        <position position="166"/>
    </location>
</feature>
<feature type="active site" description="Proton acceptor" evidence="1">
    <location>
        <position position="285"/>
    </location>
</feature>
<feature type="binding site" description="in homodimeric partner" evidence="1">
    <location>
        <position position="114"/>
    </location>
    <ligand>
        <name>substrate</name>
    </ligand>
</feature>
<feature type="binding site" evidence="1">
    <location>
        <position position="164"/>
    </location>
    <ligand>
        <name>substrate</name>
    </ligand>
</feature>
<feature type="binding site" evidence="1">
    <location>
        <position position="168"/>
    </location>
    <ligand>
        <name>substrate</name>
    </ligand>
</feature>
<feature type="binding site" description="via carbamate group" evidence="1">
    <location>
        <position position="192"/>
    </location>
    <ligand>
        <name>Mg(2+)</name>
        <dbReference type="ChEBI" id="CHEBI:18420"/>
    </ligand>
</feature>
<feature type="binding site" evidence="1">
    <location>
        <position position="194"/>
    </location>
    <ligand>
        <name>Mg(2+)</name>
        <dbReference type="ChEBI" id="CHEBI:18420"/>
    </ligand>
</feature>
<feature type="binding site" evidence="1">
    <location>
        <position position="195"/>
    </location>
    <ligand>
        <name>Mg(2+)</name>
        <dbReference type="ChEBI" id="CHEBI:18420"/>
    </ligand>
</feature>
<feature type="binding site" evidence="1">
    <location>
        <position position="286"/>
    </location>
    <ligand>
        <name>substrate</name>
    </ligand>
</feature>
<feature type="binding site" evidence="1">
    <location>
        <position position="318"/>
    </location>
    <ligand>
        <name>substrate</name>
    </ligand>
</feature>
<feature type="binding site" evidence="1">
    <location>
        <position position="370"/>
    </location>
    <ligand>
        <name>substrate</name>
    </ligand>
</feature>
<feature type="site" description="Transition state stabilizer" evidence="1">
    <location>
        <position position="325"/>
    </location>
</feature>
<feature type="modified residue" description="N6,N6,N6-trimethyllysine" evidence="1">
    <location>
        <position position="5"/>
    </location>
</feature>
<feature type="modified residue" description="N6-carboxylysine" evidence="1">
    <location>
        <position position="192"/>
    </location>
</feature>
<feature type="disulfide bond" description="Interchain; in linked form" evidence="1">
    <location>
        <position position="238"/>
    </location>
</feature>
<feature type="non-terminal residue">
    <location>
        <position position="1"/>
    </location>
</feature>
<evidence type="ECO:0000255" key="1">
    <source>
        <dbReference type="HAMAP-Rule" id="MF_01338"/>
    </source>
</evidence>
<comment type="function">
    <text evidence="1">RuBisCO catalyzes two reactions: the carboxylation of D-ribulose 1,5-bisphosphate, the primary event in carbon dioxide fixation, as well as the oxidative fragmentation of the pentose substrate in the photorespiration process. Both reactions occur simultaneously and in competition at the same active site.</text>
</comment>
<comment type="catalytic activity">
    <reaction evidence="1">
        <text>2 (2R)-3-phosphoglycerate + 2 H(+) = D-ribulose 1,5-bisphosphate + CO2 + H2O</text>
        <dbReference type="Rhea" id="RHEA:23124"/>
        <dbReference type="ChEBI" id="CHEBI:15377"/>
        <dbReference type="ChEBI" id="CHEBI:15378"/>
        <dbReference type="ChEBI" id="CHEBI:16526"/>
        <dbReference type="ChEBI" id="CHEBI:57870"/>
        <dbReference type="ChEBI" id="CHEBI:58272"/>
        <dbReference type="EC" id="4.1.1.39"/>
    </reaction>
</comment>
<comment type="catalytic activity">
    <reaction evidence="1">
        <text>D-ribulose 1,5-bisphosphate + O2 = 2-phosphoglycolate + (2R)-3-phosphoglycerate + 2 H(+)</text>
        <dbReference type="Rhea" id="RHEA:36631"/>
        <dbReference type="ChEBI" id="CHEBI:15378"/>
        <dbReference type="ChEBI" id="CHEBI:15379"/>
        <dbReference type="ChEBI" id="CHEBI:57870"/>
        <dbReference type="ChEBI" id="CHEBI:58033"/>
        <dbReference type="ChEBI" id="CHEBI:58272"/>
    </reaction>
</comment>
<comment type="cofactor">
    <cofactor evidence="1">
        <name>Mg(2+)</name>
        <dbReference type="ChEBI" id="CHEBI:18420"/>
    </cofactor>
    <text evidence="1">Binds 1 Mg(2+) ion per subunit.</text>
</comment>
<comment type="subunit">
    <text evidence="1">Heterohexadecamer of 8 large chains and 8 small chains; disulfide-linked. The disulfide link is formed within the large subunit homodimers.</text>
</comment>
<comment type="subcellular location">
    <subcellularLocation>
        <location>Plastid</location>
        <location>Chloroplast</location>
    </subcellularLocation>
</comment>
<comment type="PTM">
    <text evidence="1">The disulfide bond which can form in the large chain dimeric partners within the hexadecamer appears to be associated with oxidative stress and protein turnover.</text>
</comment>
<comment type="miscellaneous">
    <text evidence="1">The basic functional RuBisCO is composed of a large chain homodimer in a 'head-to-tail' conformation. In form I RuBisCO this homodimer is arranged in a barrel-like tetramer with the small subunits forming a tetrameric 'cap' on each end of the 'barrel'.</text>
</comment>
<comment type="similarity">
    <text evidence="1">Belongs to the RuBisCO large chain family. Type I subfamily.</text>
</comment>
<dbReference type="EC" id="4.1.1.39" evidence="1"/>
<dbReference type="EMBL" id="L14706">
    <property type="protein sequence ID" value="AAA84699.2"/>
    <property type="molecule type" value="Genomic_DNA"/>
</dbReference>
<dbReference type="SMR" id="P48717"/>
<dbReference type="GO" id="GO:0009507">
    <property type="term" value="C:chloroplast"/>
    <property type="evidence" value="ECO:0007669"/>
    <property type="project" value="UniProtKB-SubCell"/>
</dbReference>
<dbReference type="GO" id="GO:0000287">
    <property type="term" value="F:magnesium ion binding"/>
    <property type="evidence" value="ECO:0007669"/>
    <property type="project" value="InterPro"/>
</dbReference>
<dbReference type="GO" id="GO:0004497">
    <property type="term" value="F:monooxygenase activity"/>
    <property type="evidence" value="ECO:0007669"/>
    <property type="project" value="UniProtKB-KW"/>
</dbReference>
<dbReference type="GO" id="GO:0016984">
    <property type="term" value="F:ribulose-bisphosphate carboxylase activity"/>
    <property type="evidence" value="ECO:0007669"/>
    <property type="project" value="UniProtKB-EC"/>
</dbReference>
<dbReference type="GO" id="GO:0009853">
    <property type="term" value="P:photorespiration"/>
    <property type="evidence" value="ECO:0007669"/>
    <property type="project" value="UniProtKB-KW"/>
</dbReference>
<dbReference type="GO" id="GO:0019253">
    <property type="term" value="P:reductive pentose-phosphate cycle"/>
    <property type="evidence" value="ECO:0007669"/>
    <property type="project" value="UniProtKB-KW"/>
</dbReference>
<dbReference type="CDD" id="cd08212">
    <property type="entry name" value="RuBisCO_large_I"/>
    <property type="match status" value="1"/>
</dbReference>
<dbReference type="FunFam" id="3.20.20.110:FF:000001">
    <property type="entry name" value="Ribulose bisphosphate carboxylase large chain"/>
    <property type="match status" value="1"/>
</dbReference>
<dbReference type="FunFam" id="3.30.70.150:FF:000001">
    <property type="entry name" value="Ribulose bisphosphate carboxylase large chain"/>
    <property type="match status" value="1"/>
</dbReference>
<dbReference type="Gene3D" id="3.20.20.110">
    <property type="entry name" value="Ribulose bisphosphate carboxylase, large subunit, C-terminal domain"/>
    <property type="match status" value="1"/>
</dbReference>
<dbReference type="Gene3D" id="3.30.70.150">
    <property type="entry name" value="RuBisCO large subunit, N-terminal domain"/>
    <property type="match status" value="1"/>
</dbReference>
<dbReference type="HAMAP" id="MF_01338">
    <property type="entry name" value="RuBisCO_L_type1"/>
    <property type="match status" value="1"/>
</dbReference>
<dbReference type="InterPro" id="IPR033966">
    <property type="entry name" value="RuBisCO"/>
</dbReference>
<dbReference type="InterPro" id="IPR020878">
    <property type="entry name" value="RuBisCo_large_chain_AS"/>
</dbReference>
<dbReference type="InterPro" id="IPR000685">
    <property type="entry name" value="RuBisCO_lsu_C"/>
</dbReference>
<dbReference type="InterPro" id="IPR036376">
    <property type="entry name" value="RuBisCO_lsu_C_sf"/>
</dbReference>
<dbReference type="InterPro" id="IPR017443">
    <property type="entry name" value="RuBisCO_lsu_fd_N"/>
</dbReference>
<dbReference type="InterPro" id="IPR036422">
    <property type="entry name" value="RuBisCO_lsu_N_sf"/>
</dbReference>
<dbReference type="InterPro" id="IPR020888">
    <property type="entry name" value="RuBisCO_lsuI"/>
</dbReference>
<dbReference type="NCBIfam" id="NF003252">
    <property type="entry name" value="PRK04208.1"/>
    <property type="match status" value="1"/>
</dbReference>
<dbReference type="PANTHER" id="PTHR42704">
    <property type="entry name" value="RIBULOSE BISPHOSPHATE CARBOXYLASE"/>
    <property type="match status" value="1"/>
</dbReference>
<dbReference type="PANTHER" id="PTHR42704:SF17">
    <property type="entry name" value="RIBULOSE BISPHOSPHATE CARBOXYLASE LARGE CHAIN"/>
    <property type="match status" value="1"/>
</dbReference>
<dbReference type="Pfam" id="PF00016">
    <property type="entry name" value="RuBisCO_large"/>
    <property type="match status" value="1"/>
</dbReference>
<dbReference type="Pfam" id="PF02788">
    <property type="entry name" value="RuBisCO_large_N"/>
    <property type="match status" value="1"/>
</dbReference>
<dbReference type="SFLD" id="SFLDG01052">
    <property type="entry name" value="RuBisCO"/>
    <property type="match status" value="1"/>
</dbReference>
<dbReference type="SFLD" id="SFLDS00014">
    <property type="entry name" value="RuBisCO"/>
    <property type="match status" value="1"/>
</dbReference>
<dbReference type="SFLD" id="SFLDG00301">
    <property type="entry name" value="RuBisCO-like_proteins"/>
    <property type="match status" value="1"/>
</dbReference>
<dbReference type="SUPFAM" id="SSF51649">
    <property type="entry name" value="RuBisCo, C-terminal domain"/>
    <property type="match status" value="1"/>
</dbReference>
<dbReference type="SUPFAM" id="SSF54966">
    <property type="entry name" value="RuBisCO, large subunit, small (N-terminal) domain"/>
    <property type="match status" value="1"/>
</dbReference>
<dbReference type="PROSITE" id="PS00157">
    <property type="entry name" value="RUBISCO_LARGE"/>
    <property type="match status" value="1"/>
</dbReference>
<sequence length="466" mass="51536">SVGFKAGVKDYKLTYYTPDYETKDTDILAAFRMSPQPGVPAEEAGAAVAAESSTGTWTTVWTDGLTSLDRYKGRCYQIEPVAGEENQYIAYVAYPLDLFEEGSVTNMFTSIVGNVFGFKALRALRLEDLRIPPAYVKTFQGPPHGIQVERDKLNKYGRPLLGCTIKPKLGLSAKNYGRAVYECLRGGLDFTKDDENVNSQPFMRWRDRFLFCAEAIYKAQAETGEIKGHYLNATAGTCEEMMKRAVFARELGVPIVMHDYLTGGFTANTSLAHYCRDNGLLLHIHRAMHAVIDRQKNHGIHFRVLAKALRMSGGDHIHSGTVVGKLEGERDITLGFVDLLRDDFIEKDRSRGIFFTQDWVSLPGVLPVASGGIHVWHMPALTEIFGDDSVLQFGGGTLGHPWGNAPGAVANRVALEACVQARNEGRDLASEGNAIIREASKWSPELAAACEVWKEIKFEFPAMDTL</sequence>
<keyword id="KW-0113">Calvin cycle</keyword>
<keyword id="KW-0120">Carbon dioxide fixation</keyword>
<keyword id="KW-0150">Chloroplast</keyword>
<keyword id="KW-1015">Disulfide bond</keyword>
<keyword id="KW-0456">Lyase</keyword>
<keyword id="KW-0460">Magnesium</keyword>
<keyword id="KW-0479">Metal-binding</keyword>
<keyword id="KW-0488">Methylation</keyword>
<keyword id="KW-0503">Monooxygenase</keyword>
<keyword id="KW-0560">Oxidoreductase</keyword>
<keyword id="KW-0601">Photorespiration</keyword>
<keyword id="KW-0602">Photosynthesis</keyword>
<keyword id="KW-0934">Plastid</keyword>
<reference key="1">
    <citation type="submission" date="2000-03" db="EMBL/GenBank/DDBJ databases">
        <authorList>
            <person name="Price R.A."/>
            <person name="Palmer J.D."/>
        </authorList>
    </citation>
    <scope>NUCLEOTIDE SEQUENCE [GENOMIC DNA]</scope>
</reference>
<reference key="2">
    <citation type="journal article" date="1993" name="Ann. Mo. Bot. Gard.">
        <title>Phylogenetic relationships of the Geraniaceae and Geraniales from rbcL sequence comparisons.</title>
        <authorList>
            <person name="Price R.A."/>
            <person name="Palmer J.D."/>
        </authorList>
        <dbReference type="AGRICOLA" id="IND93053813"/>
    </citation>
    <scope>NUCLEOTIDE SEQUENCE [GENOMIC DNA] OF 2-466</scope>
</reference>
<protein>
    <recommendedName>
        <fullName evidence="1">Ribulose bisphosphate carboxylase large chain</fullName>
        <shortName evidence="1">RuBisCO large subunit</shortName>
        <ecNumber evidence="1">4.1.1.39</ecNumber>
    </recommendedName>
</protein>
<accession>P48717</accession>
<gene>
    <name evidence="1" type="primary">rbcL</name>
</gene>
<name>RBL_TROMA</name>
<organism>
    <name type="scientific">Tropaeolum majus</name>
    <name type="common">Common nasturtium</name>
    <name type="synonym">Indian cress</name>
    <dbReference type="NCBI Taxonomy" id="4020"/>
    <lineage>
        <taxon>Eukaryota</taxon>
        <taxon>Viridiplantae</taxon>
        <taxon>Streptophyta</taxon>
        <taxon>Embryophyta</taxon>
        <taxon>Tracheophyta</taxon>
        <taxon>Spermatophyta</taxon>
        <taxon>Magnoliopsida</taxon>
        <taxon>eudicotyledons</taxon>
        <taxon>Gunneridae</taxon>
        <taxon>Pentapetalae</taxon>
        <taxon>rosids</taxon>
        <taxon>malvids</taxon>
        <taxon>Brassicales</taxon>
        <taxon>Tropaeolaceae</taxon>
        <taxon>Tropaeolum</taxon>
    </lineage>
</organism>